<comment type="subcellular location">
    <subcellularLocation>
        <location evidence="1">Nucleus</location>
    </subcellularLocation>
</comment>
<comment type="alternative products">
    <event type="alternative splicing"/>
    <isoform>
        <id>Q8GYJ2-1</id>
        <name>1</name>
        <sequence type="displayed"/>
    </isoform>
    <isoform>
        <id>Q8GYJ2-2</id>
        <name>2</name>
        <sequence type="described" ref="VSP_037330 VSP_037331"/>
    </isoform>
</comment>
<comment type="miscellaneous">
    <molecule>Isoform 2</molecule>
    <text evidence="3">May be due to an intron retention.</text>
</comment>
<comment type="sequence caution" evidence="3">
    <conflict type="erroneous initiation">
        <sequence resource="EMBL-CDS" id="AAD26965"/>
    </conflict>
</comment>
<comment type="sequence caution" evidence="3">
    <conflict type="erroneous initiation">
        <sequence resource="EMBL-CDS" id="AAM15343"/>
    </conflict>
</comment>
<comment type="sequence caution" evidence="3">
    <conflict type="erroneous initiation">
        <sequence resource="EMBL-CDS" id="CAD29643"/>
    </conflict>
</comment>
<feature type="chain" id="PRO_0000375134" description="B3 domain-containing protein At2g36080">
    <location>
        <begin position="1"/>
        <end position="244"/>
    </location>
</feature>
<feature type="DNA-binding region" description="TF-B3" evidence="1">
    <location>
        <begin position="38"/>
        <end position="144"/>
    </location>
</feature>
<feature type="splice variant" id="VSP_037330" description="In isoform 2." evidence="2">
    <original>AQAV</original>
    <variation>TLFI</variation>
    <location>
        <begin position="170"/>
        <end position="173"/>
    </location>
</feature>
<feature type="splice variant" id="VSP_037331" description="In isoform 2." evidence="2">
    <location>
        <begin position="174"/>
        <end position="244"/>
    </location>
</feature>
<protein>
    <recommendedName>
        <fullName>B3 domain-containing protein At2g36080</fullName>
    </recommendedName>
    <alternativeName>
        <fullName>Protein AUXIN RESPONSIVE FACTOR 31</fullName>
    </alternativeName>
</protein>
<dbReference type="EMBL" id="AC007017">
    <property type="protein sequence ID" value="AAM15343.1"/>
    <property type="status" value="ALT_INIT"/>
    <property type="molecule type" value="Genomic_DNA"/>
</dbReference>
<dbReference type="EMBL" id="AC007135">
    <property type="protein sequence ID" value="AAD26965.1"/>
    <property type="status" value="ALT_INIT"/>
    <property type="molecule type" value="Genomic_DNA"/>
</dbReference>
<dbReference type="EMBL" id="CP002685">
    <property type="protein sequence ID" value="AEC09203.1"/>
    <property type="molecule type" value="Genomic_DNA"/>
</dbReference>
<dbReference type="EMBL" id="CP002685">
    <property type="protein sequence ID" value="AEC09204.1"/>
    <property type="molecule type" value="Genomic_DNA"/>
</dbReference>
<dbReference type="EMBL" id="CP002685">
    <property type="protein sequence ID" value="ANM62123.1"/>
    <property type="molecule type" value="Genomic_DNA"/>
</dbReference>
<dbReference type="EMBL" id="AK117587">
    <property type="protein sequence ID" value="BAC42244.1"/>
    <property type="molecule type" value="mRNA"/>
</dbReference>
<dbReference type="EMBL" id="AJ441075">
    <property type="protein sequence ID" value="CAD29643.1"/>
    <property type="status" value="ALT_INIT"/>
    <property type="molecule type" value="mRNA"/>
</dbReference>
<dbReference type="PIR" id="F84776">
    <property type="entry name" value="F84776"/>
</dbReference>
<dbReference type="RefSeq" id="NP_001324302.1">
    <molecule id="Q8GYJ2-2"/>
    <property type="nucleotide sequence ID" value="NM_001336587.1"/>
</dbReference>
<dbReference type="RefSeq" id="NP_181152.2">
    <molecule id="Q8GYJ2-2"/>
    <property type="nucleotide sequence ID" value="NM_129167.3"/>
</dbReference>
<dbReference type="RefSeq" id="NP_850260.1">
    <molecule id="Q8GYJ2-1"/>
    <property type="nucleotide sequence ID" value="NM_179929.3"/>
</dbReference>
<dbReference type="SMR" id="Q8GYJ2"/>
<dbReference type="BioGRID" id="3525">
    <property type="interactions" value="2"/>
</dbReference>
<dbReference type="FunCoup" id="Q8GYJ2">
    <property type="interactions" value="294"/>
</dbReference>
<dbReference type="IntAct" id="Q8GYJ2">
    <property type="interactions" value="1"/>
</dbReference>
<dbReference type="STRING" id="3702.Q8GYJ2"/>
<dbReference type="PaxDb" id="3702-AT2G36080.1"/>
<dbReference type="EnsemblPlants" id="AT2G36080.1">
    <molecule id="Q8GYJ2-1"/>
    <property type="protein sequence ID" value="AT2G36080.1"/>
    <property type="gene ID" value="AT2G36080"/>
</dbReference>
<dbReference type="EnsemblPlants" id="AT2G36080.2">
    <molecule id="Q8GYJ2-2"/>
    <property type="protein sequence ID" value="AT2G36080.2"/>
    <property type="gene ID" value="AT2G36080"/>
</dbReference>
<dbReference type="EnsemblPlants" id="AT2G36080.4">
    <molecule id="Q8GYJ2-2"/>
    <property type="protein sequence ID" value="AT2G36080.4"/>
    <property type="gene ID" value="AT2G36080"/>
</dbReference>
<dbReference type="GeneID" id="818181"/>
<dbReference type="Gramene" id="AT2G36080.1">
    <molecule id="Q8GYJ2-1"/>
    <property type="protein sequence ID" value="AT2G36080.1"/>
    <property type="gene ID" value="AT2G36080"/>
</dbReference>
<dbReference type="Gramene" id="AT2G36080.2">
    <molecule id="Q8GYJ2-2"/>
    <property type="protein sequence ID" value="AT2G36080.2"/>
    <property type="gene ID" value="AT2G36080"/>
</dbReference>
<dbReference type="Gramene" id="AT2G36080.4">
    <molecule id="Q8GYJ2-2"/>
    <property type="protein sequence ID" value="AT2G36080.4"/>
    <property type="gene ID" value="AT2G36080"/>
</dbReference>
<dbReference type="KEGG" id="ath:AT2G36080"/>
<dbReference type="Araport" id="AT2G36080"/>
<dbReference type="TAIR" id="AT2G36080">
    <property type="gene designation" value="ABS2"/>
</dbReference>
<dbReference type="eggNOG" id="KOG2580">
    <property type="taxonomic scope" value="Eukaryota"/>
</dbReference>
<dbReference type="HOGENOM" id="CLU_038898_3_1_1"/>
<dbReference type="InParanoid" id="Q8GYJ2"/>
<dbReference type="OMA" id="YYQYQVH"/>
<dbReference type="OrthoDB" id="2020802at2759"/>
<dbReference type="PhylomeDB" id="Q8GYJ2"/>
<dbReference type="PRO" id="PR:Q8GYJ2"/>
<dbReference type="Proteomes" id="UP000006548">
    <property type="component" value="Chromosome 2"/>
</dbReference>
<dbReference type="ExpressionAtlas" id="Q8GYJ2">
    <property type="expression patterns" value="baseline and differential"/>
</dbReference>
<dbReference type="GO" id="GO:0005634">
    <property type="term" value="C:nucleus"/>
    <property type="evidence" value="ECO:0007669"/>
    <property type="project" value="UniProtKB-SubCell"/>
</dbReference>
<dbReference type="GO" id="GO:0003700">
    <property type="term" value="F:DNA-binding transcription factor activity"/>
    <property type="evidence" value="ECO:0000250"/>
    <property type="project" value="TAIR"/>
</dbReference>
<dbReference type="GO" id="GO:0000976">
    <property type="term" value="F:transcription cis-regulatory region binding"/>
    <property type="evidence" value="ECO:0000353"/>
    <property type="project" value="TAIR"/>
</dbReference>
<dbReference type="GO" id="GO:0045892">
    <property type="term" value="P:negative regulation of DNA-templated transcription"/>
    <property type="evidence" value="ECO:0000314"/>
    <property type="project" value="TAIR"/>
</dbReference>
<dbReference type="CDD" id="cd10017">
    <property type="entry name" value="B3_DNA"/>
    <property type="match status" value="1"/>
</dbReference>
<dbReference type="FunFam" id="2.40.330.10:FF:000002">
    <property type="entry name" value="B3 domain-containing protein"/>
    <property type="match status" value="1"/>
</dbReference>
<dbReference type="Gene3D" id="2.40.330.10">
    <property type="entry name" value="DNA-binding pseudobarrel domain"/>
    <property type="match status" value="1"/>
</dbReference>
<dbReference type="InterPro" id="IPR003340">
    <property type="entry name" value="B3_DNA-bd"/>
</dbReference>
<dbReference type="InterPro" id="IPR015300">
    <property type="entry name" value="DNA-bd_pseudobarrel_sf"/>
</dbReference>
<dbReference type="InterPro" id="IPR044800">
    <property type="entry name" value="LEC2-like"/>
</dbReference>
<dbReference type="PANTHER" id="PTHR31140:SF70">
    <property type="entry name" value="B3 DOMAIN-CONTAINING PROTEIN OS11G0156000"/>
    <property type="match status" value="1"/>
</dbReference>
<dbReference type="PANTHER" id="PTHR31140">
    <property type="entry name" value="B3 DOMAIN-CONTAINING TRANSCRIPTION FACTOR ABI3"/>
    <property type="match status" value="1"/>
</dbReference>
<dbReference type="Pfam" id="PF02362">
    <property type="entry name" value="B3"/>
    <property type="match status" value="1"/>
</dbReference>
<dbReference type="SMART" id="SM01019">
    <property type="entry name" value="B3"/>
    <property type="match status" value="1"/>
</dbReference>
<dbReference type="SUPFAM" id="SSF101936">
    <property type="entry name" value="DNA-binding pseudobarrel domain"/>
    <property type="match status" value="1"/>
</dbReference>
<dbReference type="PROSITE" id="PS50863">
    <property type="entry name" value="B3"/>
    <property type="match status" value="1"/>
</dbReference>
<proteinExistence type="evidence at transcript level"/>
<keyword id="KW-0025">Alternative splicing</keyword>
<keyword id="KW-0238">DNA-binding</keyword>
<keyword id="KW-0539">Nucleus</keyword>
<keyword id="KW-1185">Reference proteome</keyword>
<keyword id="KW-0804">Transcription</keyword>
<keyword id="KW-0805">Transcription regulation</keyword>
<organism>
    <name type="scientific">Arabidopsis thaliana</name>
    <name type="common">Mouse-ear cress</name>
    <dbReference type="NCBI Taxonomy" id="3702"/>
    <lineage>
        <taxon>Eukaryota</taxon>
        <taxon>Viridiplantae</taxon>
        <taxon>Streptophyta</taxon>
        <taxon>Embryophyta</taxon>
        <taxon>Tracheophyta</taxon>
        <taxon>Spermatophyta</taxon>
        <taxon>Magnoliopsida</taxon>
        <taxon>eudicotyledons</taxon>
        <taxon>Gunneridae</taxon>
        <taxon>Pentapetalae</taxon>
        <taxon>rosids</taxon>
        <taxon>malvids</taxon>
        <taxon>Brassicales</taxon>
        <taxon>Brassicaceae</taxon>
        <taxon>Camelineae</taxon>
        <taxon>Arabidopsis</taxon>
    </lineage>
</organism>
<name>Y2608_ARATH</name>
<evidence type="ECO:0000255" key="1">
    <source>
        <dbReference type="PROSITE-ProRule" id="PRU00326"/>
    </source>
</evidence>
<evidence type="ECO:0000303" key="2">
    <source ref="4"/>
</evidence>
<evidence type="ECO:0000305" key="3"/>
<accession>Q8GYJ2</accession>
<accession>Q9SIH6</accession>
<reference key="1">
    <citation type="journal article" date="1999" name="Nature">
        <title>Sequence and analysis of chromosome 2 of the plant Arabidopsis thaliana.</title>
        <authorList>
            <person name="Lin X."/>
            <person name="Kaul S."/>
            <person name="Rounsley S.D."/>
            <person name="Shea T.P."/>
            <person name="Benito M.-I."/>
            <person name="Town C.D."/>
            <person name="Fujii C.Y."/>
            <person name="Mason T.M."/>
            <person name="Bowman C.L."/>
            <person name="Barnstead M.E."/>
            <person name="Feldblyum T.V."/>
            <person name="Buell C.R."/>
            <person name="Ketchum K.A."/>
            <person name="Lee J.J."/>
            <person name="Ronning C.M."/>
            <person name="Koo H.L."/>
            <person name="Moffat K.S."/>
            <person name="Cronin L.A."/>
            <person name="Shen M."/>
            <person name="Pai G."/>
            <person name="Van Aken S."/>
            <person name="Umayam L."/>
            <person name="Tallon L.J."/>
            <person name="Gill J.E."/>
            <person name="Adams M.D."/>
            <person name="Carrera A.J."/>
            <person name="Creasy T.H."/>
            <person name="Goodman H.M."/>
            <person name="Somerville C.R."/>
            <person name="Copenhaver G.P."/>
            <person name="Preuss D."/>
            <person name="Nierman W.C."/>
            <person name="White O."/>
            <person name="Eisen J.A."/>
            <person name="Salzberg S.L."/>
            <person name="Fraser C.M."/>
            <person name="Venter J.C."/>
        </authorList>
    </citation>
    <scope>NUCLEOTIDE SEQUENCE [LARGE SCALE GENOMIC DNA]</scope>
    <source>
        <strain>cv. Columbia</strain>
    </source>
</reference>
<reference key="2">
    <citation type="journal article" date="2017" name="Plant J.">
        <title>Araport11: a complete reannotation of the Arabidopsis thaliana reference genome.</title>
        <authorList>
            <person name="Cheng C.Y."/>
            <person name="Krishnakumar V."/>
            <person name="Chan A.P."/>
            <person name="Thibaud-Nissen F."/>
            <person name="Schobel S."/>
            <person name="Town C.D."/>
        </authorList>
    </citation>
    <scope>GENOME REANNOTATION</scope>
    <source>
        <strain>cv. Columbia</strain>
    </source>
</reference>
<reference key="3">
    <citation type="journal article" date="2002" name="Science">
        <title>Functional annotation of a full-length Arabidopsis cDNA collection.</title>
        <authorList>
            <person name="Seki M."/>
            <person name="Narusaka M."/>
            <person name="Kamiya A."/>
            <person name="Ishida J."/>
            <person name="Satou M."/>
            <person name="Sakurai T."/>
            <person name="Nakajima M."/>
            <person name="Enju A."/>
            <person name="Akiyama K."/>
            <person name="Oono Y."/>
            <person name="Muramatsu M."/>
            <person name="Hayashizaki Y."/>
            <person name="Kawai J."/>
            <person name="Carninci P."/>
            <person name="Itoh M."/>
            <person name="Ishii Y."/>
            <person name="Arakawa T."/>
            <person name="Shibata K."/>
            <person name="Shinagawa A."/>
            <person name="Shinozaki K."/>
        </authorList>
    </citation>
    <scope>NUCLEOTIDE SEQUENCE [LARGE SCALE MRNA] (ISOFORM 1)</scope>
    <source>
        <strain>cv. Columbia</strain>
    </source>
</reference>
<reference key="4">
    <citation type="submission" date="2002-04" db="EMBL/GenBank/DDBJ databases">
        <title>Nucleotide sequence of the putative Arabidopsis ARF31.</title>
        <authorList>
            <person name="Carabelli M."/>
            <person name="Ciarbelli A.R."/>
            <person name="Ruzza V."/>
            <person name="Sessa G."/>
            <person name="Steindler C."/>
            <person name="Ruberti I."/>
        </authorList>
    </citation>
    <scope>NUCLEOTIDE SEQUENCE [MRNA] OF 16-244 (ISOFORM 2)</scope>
    <source>
        <strain>cv. Columbia</strain>
    </source>
</reference>
<reference key="5">
    <citation type="journal article" date="2008" name="Trends Plant Sci.">
        <title>The plant B3 superfamily.</title>
        <authorList>
            <person name="Swaminathan K."/>
            <person name="Peterson K."/>
            <person name="Jack T."/>
        </authorList>
    </citation>
    <scope>GENE FAMILY</scope>
</reference>
<sequence>MSINQYSSDFHYHSLMWQQQQQQQQHQNDVVEEKEALFEKPLTPSDVGKLNRLVIPKQHAERYFPLAAAAADAVEKGLLLCFEDEEGKPWRFRYSYWNSSQSYVLTKGWSRYVKEKHLDAGDVVLFHRHRSDGGRFFIGWRRRGDSSSSSDSYRHVQSNASLQYYPHAGAQAVESQRGNSKTLRLFGVNMECQLDSDWSEPSTPDGSNTYTTNHDQFHFYPQQQHYPPPYYMDISFTGDMNRTS</sequence>
<gene>
    <name type="primary">ARF31</name>
    <name type="ordered locus">At2g36080</name>
    <name type="ORF">F9C22.1</name>
</gene>